<proteinExistence type="inferred from homology"/>
<gene>
    <name evidence="1" type="primary">gpmA</name>
    <name type="ordered locus">BCQ_2406</name>
</gene>
<sequence>MIKLVLIRHGQSLWNLENRFTGWTDVDLSEKGLSEAREAGAILKKNGYTFDVAYTSVLKRAIRTLWIVLHEMDLAWVPVHKCWKLNERHYGALQGLNKDETAQKYGEEQVHIWRRSIDVRPPALTEDDPRYEMNDPRYKALKKGEFPLTECLVDTEKRVLAYWHSEIAPKLKNGNKVIISSHGNTIRSLVKYLDNLSSDGVVSLNIPTSIPLVYELDENLRPIRHYYLSMDGEVPEGEIPKHITF</sequence>
<reference key="1">
    <citation type="journal article" date="2009" name="J. Bacteriol.">
        <title>Complete genome sequence of the extremophilic Bacillus cereus strain Q1 with industrial applications.</title>
        <authorList>
            <person name="Xiong Z."/>
            <person name="Jiang Y."/>
            <person name="Qi D."/>
            <person name="Lu H."/>
            <person name="Yang F."/>
            <person name="Yang J."/>
            <person name="Chen L."/>
            <person name="Sun L."/>
            <person name="Xu X."/>
            <person name="Xue Y."/>
            <person name="Zhu Y."/>
            <person name="Jin Q."/>
        </authorList>
    </citation>
    <scope>NUCLEOTIDE SEQUENCE [LARGE SCALE GENOMIC DNA]</scope>
    <source>
        <strain>Q1</strain>
    </source>
</reference>
<name>GPMA_BACCQ</name>
<dbReference type="EC" id="5.4.2.11" evidence="1"/>
<dbReference type="EMBL" id="CP000227">
    <property type="protein sequence ID" value="ACM12834.1"/>
    <property type="molecule type" value="Genomic_DNA"/>
</dbReference>
<dbReference type="SMR" id="B9J102"/>
<dbReference type="KEGG" id="bcq:BCQ_2406"/>
<dbReference type="HOGENOM" id="CLU_033323_1_1_9"/>
<dbReference type="UniPathway" id="UPA00109">
    <property type="reaction ID" value="UER00186"/>
</dbReference>
<dbReference type="Proteomes" id="UP000000441">
    <property type="component" value="Chromosome"/>
</dbReference>
<dbReference type="GO" id="GO:0004619">
    <property type="term" value="F:phosphoglycerate mutase activity"/>
    <property type="evidence" value="ECO:0007669"/>
    <property type="project" value="UniProtKB-EC"/>
</dbReference>
<dbReference type="GO" id="GO:0006094">
    <property type="term" value="P:gluconeogenesis"/>
    <property type="evidence" value="ECO:0007669"/>
    <property type="project" value="UniProtKB-UniRule"/>
</dbReference>
<dbReference type="GO" id="GO:0006096">
    <property type="term" value="P:glycolytic process"/>
    <property type="evidence" value="ECO:0007669"/>
    <property type="project" value="UniProtKB-UniRule"/>
</dbReference>
<dbReference type="CDD" id="cd07067">
    <property type="entry name" value="HP_PGM_like"/>
    <property type="match status" value="1"/>
</dbReference>
<dbReference type="FunFam" id="3.40.50.1240:FF:000003">
    <property type="entry name" value="2,3-bisphosphoglycerate-dependent phosphoglycerate mutase"/>
    <property type="match status" value="1"/>
</dbReference>
<dbReference type="Gene3D" id="3.40.50.1240">
    <property type="entry name" value="Phosphoglycerate mutase-like"/>
    <property type="match status" value="1"/>
</dbReference>
<dbReference type="HAMAP" id="MF_01039">
    <property type="entry name" value="PGAM_GpmA"/>
    <property type="match status" value="1"/>
</dbReference>
<dbReference type="InterPro" id="IPR013078">
    <property type="entry name" value="His_Pase_superF_clade-1"/>
</dbReference>
<dbReference type="InterPro" id="IPR029033">
    <property type="entry name" value="His_PPase_superfam"/>
</dbReference>
<dbReference type="InterPro" id="IPR001345">
    <property type="entry name" value="PG/BPGM_mutase_AS"/>
</dbReference>
<dbReference type="InterPro" id="IPR005952">
    <property type="entry name" value="Phosphogly_mut1"/>
</dbReference>
<dbReference type="NCBIfam" id="TIGR01258">
    <property type="entry name" value="pgm_1"/>
    <property type="match status" value="1"/>
</dbReference>
<dbReference type="NCBIfam" id="NF010713">
    <property type="entry name" value="PRK14115.1"/>
    <property type="match status" value="1"/>
</dbReference>
<dbReference type="PANTHER" id="PTHR11931">
    <property type="entry name" value="PHOSPHOGLYCERATE MUTASE"/>
    <property type="match status" value="1"/>
</dbReference>
<dbReference type="Pfam" id="PF00300">
    <property type="entry name" value="His_Phos_1"/>
    <property type="match status" value="1"/>
</dbReference>
<dbReference type="PIRSF" id="PIRSF000709">
    <property type="entry name" value="6PFK_2-Ptase"/>
    <property type="match status" value="1"/>
</dbReference>
<dbReference type="SMART" id="SM00855">
    <property type="entry name" value="PGAM"/>
    <property type="match status" value="1"/>
</dbReference>
<dbReference type="SUPFAM" id="SSF53254">
    <property type="entry name" value="Phosphoglycerate mutase-like"/>
    <property type="match status" value="1"/>
</dbReference>
<dbReference type="PROSITE" id="PS00175">
    <property type="entry name" value="PG_MUTASE"/>
    <property type="match status" value="1"/>
</dbReference>
<accession>B9J102</accession>
<protein>
    <recommendedName>
        <fullName evidence="1">2,3-bisphosphoglycerate-dependent phosphoglycerate mutase</fullName>
        <shortName evidence="1">BPG-dependent PGAM</shortName>
        <shortName evidence="1">PGAM</shortName>
        <shortName evidence="1">Phosphoglyceromutase</shortName>
        <shortName evidence="1">dPGM</shortName>
        <ecNumber evidence="1">5.4.2.11</ecNumber>
    </recommendedName>
</protein>
<organism>
    <name type="scientific">Bacillus cereus (strain Q1)</name>
    <dbReference type="NCBI Taxonomy" id="361100"/>
    <lineage>
        <taxon>Bacteria</taxon>
        <taxon>Bacillati</taxon>
        <taxon>Bacillota</taxon>
        <taxon>Bacilli</taxon>
        <taxon>Bacillales</taxon>
        <taxon>Bacillaceae</taxon>
        <taxon>Bacillus</taxon>
        <taxon>Bacillus cereus group</taxon>
    </lineage>
</organism>
<comment type="function">
    <text evidence="1">Catalyzes the interconversion of 2-phosphoglycerate and 3-phosphoglycerate.</text>
</comment>
<comment type="catalytic activity">
    <reaction evidence="1">
        <text>(2R)-2-phosphoglycerate = (2R)-3-phosphoglycerate</text>
        <dbReference type="Rhea" id="RHEA:15901"/>
        <dbReference type="ChEBI" id="CHEBI:58272"/>
        <dbReference type="ChEBI" id="CHEBI:58289"/>
        <dbReference type="EC" id="5.4.2.11"/>
    </reaction>
</comment>
<comment type="pathway">
    <text evidence="1">Carbohydrate degradation; glycolysis; pyruvate from D-glyceraldehyde 3-phosphate: step 3/5.</text>
</comment>
<comment type="similarity">
    <text evidence="1">Belongs to the phosphoglycerate mutase family. BPG-dependent PGAM subfamily.</text>
</comment>
<feature type="chain" id="PRO_1000149501" description="2,3-bisphosphoglycerate-dependent phosphoglycerate mutase">
    <location>
        <begin position="1"/>
        <end position="245"/>
    </location>
</feature>
<feature type="active site" description="Tele-phosphohistidine intermediate" evidence="1">
    <location>
        <position position="9"/>
    </location>
</feature>
<feature type="active site" description="Proton donor/acceptor" evidence="1">
    <location>
        <position position="87"/>
    </location>
</feature>
<feature type="binding site" evidence="1">
    <location>
        <begin position="8"/>
        <end position="15"/>
    </location>
    <ligand>
        <name>substrate</name>
    </ligand>
</feature>
<feature type="binding site" evidence="1">
    <location>
        <begin position="21"/>
        <end position="22"/>
    </location>
    <ligand>
        <name>substrate</name>
    </ligand>
</feature>
<feature type="binding site" evidence="1">
    <location>
        <position position="60"/>
    </location>
    <ligand>
        <name>substrate</name>
    </ligand>
</feature>
<feature type="binding site" evidence="1">
    <location>
        <begin position="87"/>
        <end position="90"/>
    </location>
    <ligand>
        <name>substrate</name>
    </ligand>
</feature>
<feature type="binding site" evidence="1">
    <location>
        <position position="98"/>
    </location>
    <ligand>
        <name>substrate</name>
    </ligand>
</feature>
<feature type="binding site" evidence="1">
    <location>
        <begin position="114"/>
        <end position="115"/>
    </location>
    <ligand>
        <name>substrate</name>
    </ligand>
</feature>
<feature type="binding site" evidence="1">
    <location>
        <begin position="183"/>
        <end position="184"/>
    </location>
    <ligand>
        <name>substrate</name>
    </ligand>
</feature>
<feature type="site" description="Transition state stabilizer" evidence="1">
    <location>
        <position position="182"/>
    </location>
</feature>
<evidence type="ECO:0000255" key="1">
    <source>
        <dbReference type="HAMAP-Rule" id="MF_01039"/>
    </source>
</evidence>
<keyword id="KW-0312">Gluconeogenesis</keyword>
<keyword id="KW-0324">Glycolysis</keyword>
<keyword id="KW-0413">Isomerase</keyword>